<name>DRE1I_ORYSJ</name>
<gene>
    <name type="primary">DREB1I</name>
    <name type="synonym">ERF29</name>
    <name type="ordered locus">Os08g0545500</name>
    <name type="ordered locus">LOC_Os08g43210</name>
    <name type="ORF">OJ1323_A06.8</name>
    <name type="ORF">P0623F08.41</name>
</gene>
<protein>
    <recommendedName>
        <fullName>Dehydration-responsive element-binding protein 1I</fullName>
        <shortName>Protein DREB1I</shortName>
    </recommendedName>
</protein>
<dbReference type="EMBL" id="AP004163">
    <property type="protein sequence ID" value="BAD09225.1"/>
    <property type="status" value="ALT_SEQ"/>
    <property type="molecule type" value="Genomic_DNA"/>
</dbReference>
<dbReference type="EMBL" id="AP004632">
    <property type="protein sequence ID" value="BAD09739.1"/>
    <property type="status" value="ALT_SEQ"/>
    <property type="molecule type" value="Genomic_DNA"/>
</dbReference>
<dbReference type="EMBL" id="AP008214">
    <property type="protein sequence ID" value="BAF24329.1"/>
    <property type="molecule type" value="Genomic_DNA"/>
</dbReference>
<dbReference type="EMBL" id="AP014964">
    <property type="status" value="NOT_ANNOTATED_CDS"/>
    <property type="molecule type" value="Genomic_DNA"/>
</dbReference>
<dbReference type="RefSeq" id="XP_015648963.1">
    <property type="nucleotide sequence ID" value="XM_015793477.1"/>
</dbReference>
<dbReference type="SMR" id="Q0J3Y6"/>
<dbReference type="PaxDb" id="39947-Q0J3Y6"/>
<dbReference type="KEGG" id="dosa:Os08g0545500"/>
<dbReference type="InParanoid" id="Q0J3Y6"/>
<dbReference type="OrthoDB" id="693000at2759"/>
<dbReference type="PlantReactome" id="R-OSA-9826782">
    <property type="pathway name" value="Regulation of seed germination and coleoptile growth under submergence and normal gravity environment"/>
</dbReference>
<dbReference type="Proteomes" id="UP000000763">
    <property type="component" value="Chromosome 8"/>
</dbReference>
<dbReference type="Proteomes" id="UP000059680">
    <property type="component" value="Chromosome 8"/>
</dbReference>
<dbReference type="GO" id="GO:0005634">
    <property type="term" value="C:nucleus"/>
    <property type="evidence" value="ECO:0007669"/>
    <property type="project" value="UniProtKB-SubCell"/>
</dbReference>
<dbReference type="GO" id="GO:0003677">
    <property type="term" value="F:DNA binding"/>
    <property type="evidence" value="ECO:0007669"/>
    <property type="project" value="UniProtKB-KW"/>
</dbReference>
<dbReference type="GO" id="GO:0003700">
    <property type="term" value="F:DNA-binding transcription factor activity"/>
    <property type="evidence" value="ECO:0007669"/>
    <property type="project" value="InterPro"/>
</dbReference>
<dbReference type="Gene3D" id="3.30.730.10">
    <property type="entry name" value="AP2/ERF domain"/>
    <property type="match status" value="1"/>
</dbReference>
<dbReference type="InterPro" id="IPR001471">
    <property type="entry name" value="AP2/ERF_dom"/>
</dbReference>
<dbReference type="InterPro" id="IPR036955">
    <property type="entry name" value="AP2/ERF_dom_sf"/>
</dbReference>
<dbReference type="InterPro" id="IPR016177">
    <property type="entry name" value="DNA-bd_dom_sf"/>
</dbReference>
<dbReference type="InterPro" id="IPR045277">
    <property type="entry name" value="DRE1A-I"/>
</dbReference>
<dbReference type="PANTHER" id="PTHR31839:SF10">
    <property type="entry name" value="DEHYDRATION-RESPONSIVE ELEMENT-BINDING PROTEIN 1A"/>
    <property type="match status" value="1"/>
</dbReference>
<dbReference type="PANTHER" id="PTHR31839">
    <property type="entry name" value="DEHYDRATION-RESPONSIVE ELEMENT-BINDING PROTEIN 1D"/>
    <property type="match status" value="1"/>
</dbReference>
<dbReference type="Pfam" id="PF00847">
    <property type="entry name" value="AP2"/>
    <property type="match status" value="1"/>
</dbReference>
<dbReference type="SMART" id="SM00380">
    <property type="entry name" value="AP2"/>
    <property type="match status" value="1"/>
</dbReference>
<dbReference type="SUPFAM" id="SSF54171">
    <property type="entry name" value="DNA-binding domain"/>
    <property type="match status" value="1"/>
</dbReference>
<dbReference type="PROSITE" id="PS51032">
    <property type="entry name" value="AP2_ERF"/>
    <property type="match status" value="1"/>
</dbReference>
<sequence>MCTSKLEEITGEWPPPALQAASTTSSSEPCRRLSPPSSKRPAGRTKFHETRHPVFRGVRRRGRAGRWVCEVRVPGRRGCRLWLGTFDAADAAARAHDAAMLALRGRAAACLNFADSAWLLAVPPPATLRCAADVQRAVARALEDFEQRESSSSVFPLAIDVVAEDAMSATSEPSAASDDDAVTSSSSTTDADEEASPFELDVVSDMGWSLYYASLAEGLLMEPPASGASSDDDDDAIVDSSDIADVSLWSY</sequence>
<feature type="chain" id="PRO_0000323047" description="Dehydration-responsive element-binding protein 1I">
    <location>
        <begin position="1"/>
        <end position="251"/>
    </location>
</feature>
<feature type="DNA-binding region" description="AP2/ERF" evidence="2">
    <location>
        <begin position="54"/>
        <end position="114"/>
    </location>
</feature>
<feature type="region of interest" description="Disordered" evidence="3">
    <location>
        <begin position="1"/>
        <end position="50"/>
    </location>
</feature>
<feature type="region of interest" description="Disordered" evidence="3">
    <location>
        <begin position="169"/>
        <end position="198"/>
    </location>
</feature>
<keyword id="KW-0010">Activator</keyword>
<keyword id="KW-0238">DNA-binding</keyword>
<keyword id="KW-0539">Nucleus</keyword>
<keyword id="KW-1185">Reference proteome</keyword>
<keyword id="KW-0346">Stress response</keyword>
<keyword id="KW-0804">Transcription</keyword>
<keyword id="KW-0805">Transcription regulation</keyword>
<reference key="1">
    <citation type="journal article" date="2005" name="Nature">
        <title>The map-based sequence of the rice genome.</title>
        <authorList>
            <consortium name="International rice genome sequencing project (IRGSP)"/>
        </authorList>
    </citation>
    <scope>NUCLEOTIDE SEQUENCE [LARGE SCALE GENOMIC DNA]</scope>
    <source>
        <strain>cv. Nipponbare</strain>
    </source>
</reference>
<reference key="2">
    <citation type="journal article" date="2008" name="Nucleic Acids Res.">
        <title>The rice annotation project database (RAP-DB): 2008 update.</title>
        <authorList>
            <consortium name="The rice annotation project (RAP)"/>
        </authorList>
    </citation>
    <scope>GENOME REANNOTATION</scope>
    <source>
        <strain>cv. Nipponbare</strain>
    </source>
</reference>
<reference key="3">
    <citation type="journal article" date="2013" name="Rice">
        <title>Improvement of the Oryza sativa Nipponbare reference genome using next generation sequence and optical map data.</title>
        <authorList>
            <person name="Kawahara Y."/>
            <person name="de la Bastide M."/>
            <person name="Hamilton J.P."/>
            <person name="Kanamori H."/>
            <person name="McCombie W.R."/>
            <person name="Ouyang S."/>
            <person name="Schwartz D.C."/>
            <person name="Tanaka T."/>
            <person name="Wu J."/>
            <person name="Zhou S."/>
            <person name="Childs K.L."/>
            <person name="Davidson R.M."/>
            <person name="Lin H."/>
            <person name="Quesada-Ocampo L."/>
            <person name="Vaillancourt B."/>
            <person name="Sakai H."/>
            <person name="Lee S.S."/>
            <person name="Kim J."/>
            <person name="Numa H."/>
            <person name="Itoh T."/>
            <person name="Buell C.R."/>
            <person name="Matsumoto T."/>
        </authorList>
    </citation>
    <scope>GENOME REANNOTATION</scope>
    <source>
        <strain>cv. Nipponbare</strain>
    </source>
</reference>
<reference key="4">
    <citation type="journal article" date="2005" name="Plant Mol. Biol.">
        <title>Structural, functional, and phylogenetic characterization of a large CBF gene family in barley.</title>
        <authorList>
            <person name="Skinner J.S."/>
            <person name="von Zitzewitz J."/>
            <person name="Szuecs P."/>
            <person name="Marquez-Cedillo L."/>
            <person name="Filichkin T."/>
            <person name="Amundsen K."/>
            <person name="Stockinger E.J."/>
            <person name="Thomashow M.F."/>
            <person name="Chen T.H.H."/>
            <person name="Hayes P.M."/>
        </authorList>
    </citation>
    <scope>GENE FAMILY</scope>
    <source>
        <strain>cv. Nipponbare</strain>
    </source>
</reference>
<reference key="5">
    <citation type="journal article" date="2006" name="Plant Physiol.">
        <title>Genome-wide analysis of the ERF gene family in Arabidopsis and rice.</title>
        <authorList>
            <person name="Nakano T."/>
            <person name="Suzuki K."/>
            <person name="Fujimura T."/>
            <person name="Shinshi H."/>
        </authorList>
    </citation>
    <scope>GENE FAMILY</scope>
    <scope>NOMENCLATURE</scope>
</reference>
<accession>Q0J3Y6</accession>
<accession>Q6ZBG9</accession>
<evidence type="ECO:0000250" key="1"/>
<evidence type="ECO:0000255" key="2">
    <source>
        <dbReference type="PROSITE-ProRule" id="PRU00366"/>
    </source>
</evidence>
<evidence type="ECO:0000256" key="3">
    <source>
        <dbReference type="SAM" id="MobiDB-lite"/>
    </source>
</evidence>
<evidence type="ECO:0000305" key="4"/>
<proteinExistence type="evidence at transcript level"/>
<organism>
    <name type="scientific">Oryza sativa subsp. japonica</name>
    <name type="common">Rice</name>
    <dbReference type="NCBI Taxonomy" id="39947"/>
    <lineage>
        <taxon>Eukaryota</taxon>
        <taxon>Viridiplantae</taxon>
        <taxon>Streptophyta</taxon>
        <taxon>Embryophyta</taxon>
        <taxon>Tracheophyta</taxon>
        <taxon>Spermatophyta</taxon>
        <taxon>Magnoliopsida</taxon>
        <taxon>Liliopsida</taxon>
        <taxon>Poales</taxon>
        <taxon>Poaceae</taxon>
        <taxon>BOP clade</taxon>
        <taxon>Oryzoideae</taxon>
        <taxon>Oryzeae</taxon>
        <taxon>Oryzinae</taxon>
        <taxon>Oryza</taxon>
        <taxon>Oryza sativa</taxon>
    </lineage>
</organism>
<comment type="function">
    <text evidence="1">Transcriptional activator that binds specifically to the DNA sequence 5'-[AG]CCGAC-3'. Binding to the C-repeat/DRE element mediates high salinity- and dehydration-inducible transcription (By similarity).</text>
</comment>
<comment type="subcellular location">
    <subcellularLocation>
        <location evidence="4">Nucleus</location>
    </subcellularLocation>
</comment>
<comment type="similarity">
    <text evidence="4">Belongs to the AP2/ERF transcription factor family. ERF subfamily.</text>
</comment>
<comment type="sequence caution" evidence="4">
    <conflict type="erroneous gene model prediction">
        <sequence resource="EMBL-CDS" id="BAD09225"/>
    </conflict>
</comment>
<comment type="sequence caution" evidence="4">
    <conflict type="erroneous gene model prediction">
        <sequence resource="EMBL-CDS" id="BAD09739"/>
    </conflict>
</comment>